<sequence>MAPSKWDDEEDSSSPPPPPVVARRKFDDEEEEDVLDSWDAAEDSEVEREKAAKAAAAAAKAEAEAAAKKKSKAQRIEEHKQERKKQAEANESDEDSDEDEAARRARLRRTEKEGDLKHAQDLFDDIDLNRNRGAPKAIVISDSADPTQAVDLSAMPLFKPTTKDQFTRLTTTLIPLLTAHSKKPHYALWAQEFTKQLVKELNSGDVKKIASALTTISNEKMREERAADKGNKKTKAAKTKVSLVASRDNKIDATPYDDDGLDDDDFM</sequence>
<feature type="chain" id="PRO_0000365157" description="Eukaryotic translation initiation factor 3 subunit J">
    <location>
        <begin position="1"/>
        <end position="267"/>
    </location>
</feature>
<feature type="region of interest" description="Disordered" evidence="2">
    <location>
        <begin position="1"/>
        <end position="128"/>
    </location>
</feature>
<feature type="region of interest" description="Disordered" evidence="2">
    <location>
        <begin position="220"/>
        <end position="241"/>
    </location>
</feature>
<feature type="coiled-coil region" evidence="1">
    <location>
        <begin position="44"/>
        <end position="96"/>
    </location>
</feature>
<feature type="compositionally biased region" description="Acidic residues" evidence="2">
    <location>
        <begin position="28"/>
        <end position="46"/>
    </location>
</feature>
<feature type="compositionally biased region" description="Basic and acidic residues" evidence="2">
    <location>
        <begin position="74"/>
        <end position="88"/>
    </location>
</feature>
<feature type="compositionally biased region" description="Acidic residues" evidence="2">
    <location>
        <begin position="90"/>
        <end position="100"/>
    </location>
</feature>
<feature type="compositionally biased region" description="Basic and acidic residues" evidence="2">
    <location>
        <begin position="108"/>
        <end position="121"/>
    </location>
</feature>
<feature type="compositionally biased region" description="Basic and acidic residues" evidence="2">
    <location>
        <begin position="220"/>
        <end position="231"/>
    </location>
</feature>
<comment type="function">
    <text evidence="1">Component of the eukaryotic translation initiation factor 3 (eIF-3) complex, which is involved in protein synthesis of a specialized repertoire of mRNAs and, together with other initiation factors, stimulates binding of mRNA and methionyl-tRNAi to the 40S ribosome. The eIF-3 complex specifically targets and initiates translation of a subset of mRNAs involved in cell proliferation.</text>
</comment>
<comment type="subunit">
    <text evidence="1">Component of the eukaryotic translation initiation factor 3 (eIF-3) complex.</text>
</comment>
<comment type="subcellular location">
    <subcellularLocation>
        <location evidence="1">Cytoplasm</location>
    </subcellularLocation>
</comment>
<comment type="similarity">
    <text evidence="1">Belongs to the eIF-3 subunit J family.</text>
</comment>
<gene>
    <name type="primary">hcr1</name>
    <name type="ORF">NFIA_052410</name>
</gene>
<organism>
    <name type="scientific">Neosartorya fischeri (strain ATCC 1020 / DSM 3700 / CBS 544.65 / FGSC A1164 / JCM 1740 / NRRL 181 / WB 181)</name>
    <name type="common">Aspergillus fischerianus</name>
    <dbReference type="NCBI Taxonomy" id="331117"/>
    <lineage>
        <taxon>Eukaryota</taxon>
        <taxon>Fungi</taxon>
        <taxon>Dikarya</taxon>
        <taxon>Ascomycota</taxon>
        <taxon>Pezizomycotina</taxon>
        <taxon>Eurotiomycetes</taxon>
        <taxon>Eurotiomycetidae</taxon>
        <taxon>Eurotiales</taxon>
        <taxon>Aspergillaceae</taxon>
        <taxon>Aspergillus</taxon>
        <taxon>Aspergillus subgen. Fumigati</taxon>
    </lineage>
</organism>
<name>EIF3J_NEOFI</name>
<protein>
    <recommendedName>
        <fullName evidence="1">Eukaryotic translation initiation factor 3 subunit J</fullName>
        <shortName evidence="1">eIF3j</shortName>
    </recommendedName>
    <alternativeName>
        <fullName>Eukaryotic translation initiation factor 3 30 kDa subunit</fullName>
        <shortName>eIF-3 30 kDa</shortName>
    </alternativeName>
</protein>
<dbReference type="EMBL" id="DS027698">
    <property type="protein sequence ID" value="EAW15896.1"/>
    <property type="molecule type" value="Genomic_DNA"/>
</dbReference>
<dbReference type="RefSeq" id="XP_001257793.1">
    <property type="nucleotide sequence ID" value="XM_001257792.1"/>
</dbReference>
<dbReference type="SMR" id="A1DM75"/>
<dbReference type="STRING" id="331117.A1DM75"/>
<dbReference type="EnsemblFungi" id="EAW15896">
    <property type="protein sequence ID" value="EAW15896"/>
    <property type="gene ID" value="NFIA_052410"/>
</dbReference>
<dbReference type="GeneID" id="4584308"/>
<dbReference type="KEGG" id="nfi:NFIA_052410"/>
<dbReference type="VEuPathDB" id="FungiDB:NFIA_052410"/>
<dbReference type="eggNOG" id="KOG4813">
    <property type="taxonomic scope" value="Eukaryota"/>
</dbReference>
<dbReference type="HOGENOM" id="CLU_087988_0_0_1"/>
<dbReference type="OMA" id="KPHYALW"/>
<dbReference type="OrthoDB" id="20381at2759"/>
<dbReference type="Proteomes" id="UP000006702">
    <property type="component" value="Unassembled WGS sequence"/>
</dbReference>
<dbReference type="GO" id="GO:0016282">
    <property type="term" value="C:eukaryotic 43S preinitiation complex"/>
    <property type="evidence" value="ECO:0007669"/>
    <property type="project" value="UniProtKB-UniRule"/>
</dbReference>
<dbReference type="GO" id="GO:0033290">
    <property type="term" value="C:eukaryotic 48S preinitiation complex"/>
    <property type="evidence" value="ECO:0007669"/>
    <property type="project" value="UniProtKB-UniRule"/>
</dbReference>
<dbReference type="GO" id="GO:0005852">
    <property type="term" value="C:eukaryotic translation initiation factor 3 complex"/>
    <property type="evidence" value="ECO:0007669"/>
    <property type="project" value="UniProtKB-UniRule"/>
</dbReference>
<dbReference type="GO" id="GO:0003743">
    <property type="term" value="F:translation initiation factor activity"/>
    <property type="evidence" value="ECO:0007669"/>
    <property type="project" value="UniProtKB-UniRule"/>
</dbReference>
<dbReference type="GO" id="GO:0001732">
    <property type="term" value="P:formation of cytoplasmic translation initiation complex"/>
    <property type="evidence" value="ECO:0007669"/>
    <property type="project" value="UniProtKB-UniRule"/>
</dbReference>
<dbReference type="FunFam" id="1.10.246.60:FF:000003">
    <property type="entry name" value="Eukaryotic translation initiation factor 3 subunit J"/>
    <property type="match status" value="1"/>
</dbReference>
<dbReference type="Gene3D" id="1.10.246.60">
    <property type="entry name" value="Eukaryotic translation initiation factor 3 like domains"/>
    <property type="match status" value="1"/>
</dbReference>
<dbReference type="HAMAP" id="MF_03009">
    <property type="entry name" value="eIF3j"/>
    <property type="match status" value="1"/>
</dbReference>
<dbReference type="InterPro" id="IPR023194">
    <property type="entry name" value="eIF3-like_dom_sf"/>
</dbReference>
<dbReference type="InterPro" id="IPR013906">
    <property type="entry name" value="eIF3j"/>
</dbReference>
<dbReference type="PANTHER" id="PTHR21681">
    <property type="entry name" value="EUKARYOTIC TRANSLATION INITIATION FACTOR 3 SUBUNIT J"/>
    <property type="match status" value="1"/>
</dbReference>
<dbReference type="PANTHER" id="PTHR21681:SF0">
    <property type="entry name" value="EUKARYOTIC TRANSLATION INITIATION FACTOR 3 SUBUNIT J"/>
    <property type="match status" value="1"/>
</dbReference>
<dbReference type="Pfam" id="PF08597">
    <property type="entry name" value="eIF3_subunit"/>
    <property type="match status" value="1"/>
</dbReference>
<evidence type="ECO:0000255" key="1">
    <source>
        <dbReference type="HAMAP-Rule" id="MF_03009"/>
    </source>
</evidence>
<evidence type="ECO:0000256" key="2">
    <source>
        <dbReference type="SAM" id="MobiDB-lite"/>
    </source>
</evidence>
<proteinExistence type="inferred from homology"/>
<keyword id="KW-0175">Coiled coil</keyword>
<keyword id="KW-0963">Cytoplasm</keyword>
<keyword id="KW-0396">Initiation factor</keyword>
<keyword id="KW-0648">Protein biosynthesis</keyword>
<keyword id="KW-1185">Reference proteome</keyword>
<reference key="1">
    <citation type="journal article" date="2008" name="PLoS Genet.">
        <title>Genomic islands in the pathogenic filamentous fungus Aspergillus fumigatus.</title>
        <authorList>
            <person name="Fedorova N.D."/>
            <person name="Khaldi N."/>
            <person name="Joardar V.S."/>
            <person name="Maiti R."/>
            <person name="Amedeo P."/>
            <person name="Anderson M.J."/>
            <person name="Crabtree J."/>
            <person name="Silva J.C."/>
            <person name="Badger J.H."/>
            <person name="Albarraq A."/>
            <person name="Angiuoli S."/>
            <person name="Bussey H."/>
            <person name="Bowyer P."/>
            <person name="Cotty P.J."/>
            <person name="Dyer P.S."/>
            <person name="Egan A."/>
            <person name="Galens K."/>
            <person name="Fraser-Liggett C.M."/>
            <person name="Haas B.J."/>
            <person name="Inman J.M."/>
            <person name="Kent R."/>
            <person name="Lemieux S."/>
            <person name="Malavazi I."/>
            <person name="Orvis J."/>
            <person name="Roemer T."/>
            <person name="Ronning C.M."/>
            <person name="Sundaram J.P."/>
            <person name="Sutton G."/>
            <person name="Turner G."/>
            <person name="Venter J.C."/>
            <person name="White O.R."/>
            <person name="Whitty B.R."/>
            <person name="Youngman P."/>
            <person name="Wolfe K.H."/>
            <person name="Goldman G.H."/>
            <person name="Wortman J.R."/>
            <person name="Jiang B."/>
            <person name="Denning D.W."/>
            <person name="Nierman W.C."/>
        </authorList>
    </citation>
    <scope>NUCLEOTIDE SEQUENCE [LARGE SCALE GENOMIC DNA]</scope>
    <source>
        <strain>ATCC 1020 / DSM 3700 / CBS 544.65 / FGSC A1164 / JCM 1740 / NRRL 181 / WB 181</strain>
    </source>
</reference>
<accession>A1DM75</accession>